<name>A85C_MYCTO</name>
<dbReference type="EC" id="2.3.1.122"/>
<dbReference type="EC" id="2.3.1.20"/>
<dbReference type="EMBL" id="AE000516">
    <property type="protein sequence ID" value="AAK44361.1"/>
    <property type="status" value="ALT_INIT"/>
    <property type="molecule type" value="Genomic_DNA"/>
</dbReference>
<dbReference type="PIR" id="D70615">
    <property type="entry name" value="D70615"/>
</dbReference>
<dbReference type="RefSeq" id="WP_003400908.1">
    <property type="nucleotide sequence ID" value="NZ_KK341227.1"/>
</dbReference>
<dbReference type="SMR" id="P9WQN8"/>
<dbReference type="ESTHER" id="myctu-a85c">
    <property type="family name" value="A85-Mycolyl-transferase"/>
</dbReference>
<dbReference type="GeneID" id="45424095"/>
<dbReference type="KEGG" id="mtc:MT0137"/>
<dbReference type="PATRIC" id="fig|83331.31.peg.148"/>
<dbReference type="HOGENOM" id="CLU_026624_3_1_11"/>
<dbReference type="BRENDA" id="2.3.1.122">
    <property type="organism ID" value="3445"/>
</dbReference>
<dbReference type="Proteomes" id="UP000001020">
    <property type="component" value="Chromosome"/>
</dbReference>
<dbReference type="GO" id="GO:0005576">
    <property type="term" value="C:extracellular region"/>
    <property type="evidence" value="ECO:0007669"/>
    <property type="project" value="UniProtKB-SubCell"/>
</dbReference>
<dbReference type="GO" id="GO:0004144">
    <property type="term" value="F:diacylglycerol O-acyltransferase activity"/>
    <property type="evidence" value="ECO:0007669"/>
    <property type="project" value="UniProtKB-EC"/>
</dbReference>
<dbReference type="GO" id="GO:0050348">
    <property type="term" value="F:trehalose O-mycolyltransferase activity"/>
    <property type="evidence" value="ECO:0007669"/>
    <property type="project" value="UniProtKB-EC"/>
</dbReference>
<dbReference type="FunFam" id="3.40.50.1820:FF:000086">
    <property type="entry name" value="Diacylglycerol acyltransferase/mycolyltransferase Ag85C"/>
    <property type="match status" value="1"/>
</dbReference>
<dbReference type="Gene3D" id="3.40.50.1820">
    <property type="entry name" value="alpha/beta hydrolase"/>
    <property type="match status" value="1"/>
</dbReference>
<dbReference type="InterPro" id="IPR029058">
    <property type="entry name" value="AB_hydrolase_fold"/>
</dbReference>
<dbReference type="InterPro" id="IPR000801">
    <property type="entry name" value="Esterase-like"/>
</dbReference>
<dbReference type="InterPro" id="IPR050583">
    <property type="entry name" value="Mycobacterial_A85_antigen"/>
</dbReference>
<dbReference type="PANTHER" id="PTHR48098:SF1">
    <property type="entry name" value="DIACYLGLYCEROL ACYLTRANSFERASE_MYCOLYLTRANSFERASE AG85A"/>
    <property type="match status" value="1"/>
</dbReference>
<dbReference type="PANTHER" id="PTHR48098">
    <property type="entry name" value="ENTEROCHELIN ESTERASE-RELATED"/>
    <property type="match status" value="1"/>
</dbReference>
<dbReference type="Pfam" id="PF00756">
    <property type="entry name" value="Esterase"/>
    <property type="match status" value="1"/>
</dbReference>
<dbReference type="SUPFAM" id="SSF53474">
    <property type="entry name" value="alpha/beta-Hydrolases"/>
    <property type="match status" value="1"/>
</dbReference>
<comment type="function">
    <text evidence="1">The antigen 85 proteins (FbpA, FbpB, FbpC) are responsible for the high affinity of mycobacteria to fibronectin, a large adhesive glycoprotein, which facilitates the attachment of M.tuberculosis to murine alveolar macrophages (AMs). They also help to maintain the integrity of the cell wall by catalyzing the transfer of mycolic acids to cell wall arabinogalactan and through the synthesis of alpha,alpha-trehalose dimycolate (TDM, cord factor). They catalyze the transfer of a mycoloyl residue from one molecule of alpha,alpha-trehalose monomycolate (TMM) to another TMM, leading to the formation of TDM (By similarity).</text>
</comment>
<comment type="catalytic activity">
    <reaction>
        <text>an acyl-CoA + a 1,2-diacyl-sn-glycerol = a triacyl-sn-glycerol + CoA</text>
        <dbReference type="Rhea" id="RHEA:10868"/>
        <dbReference type="ChEBI" id="CHEBI:17815"/>
        <dbReference type="ChEBI" id="CHEBI:57287"/>
        <dbReference type="ChEBI" id="CHEBI:58342"/>
        <dbReference type="ChEBI" id="CHEBI:64615"/>
        <dbReference type="EC" id="2.3.1.20"/>
    </reaction>
</comment>
<comment type="catalytic activity">
    <reaction>
        <text>2 alpha,alpha'-trehalose 6-mycolate = alpha,alpha'-trehalose 6,6'-bismycolate + alpha,alpha-trehalose</text>
        <dbReference type="Rhea" id="RHEA:23472"/>
        <dbReference type="ChEBI" id="CHEBI:16551"/>
        <dbReference type="ChEBI" id="CHEBI:18195"/>
        <dbReference type="ChEBI" id="CHEBI:18234"/>
        <dbReference type="EC" id="2.3.1.122"/>
    </reaction>
</comment>
<comment type="subunit">
    <text evidence="1">Homodimer.</text>
</comment>
<comment type="subcellular location">
    <subcellularLocation>
        <location evidence="1">Secreted</location>
    </subcellularLocation>
</comment>
<comment type="similarity">
    <text evidence="3">Belongs to the mycobacterial A85 antigen family.</text>
</comment>
<comment type="sequence caution" evidence="3">
    <conflict type="erroneous initiation">
        <sequence resource="EMBL-CDS" id="AAK44361"/>
    </conflict>
    <text>Extended N-terminus.</text>
</comment>
<gene>
    <name type="primary">fbpC</name>
    <name type="synonym">mpt45</name>
    <name type="ordered locus">MT0137</name>
</gene>
<reference key="1">
    <citation type="journal article" date="2002" name="J. Bacteriol.">
        <title>Whole-genome comparison of Mycobacterium tuberculosis clinical and laboratory strains.</title>
        <authorList>
            <person name="Fleischmann R.D."/>
            <person name="Alland D."/>
            <person name="Eisen J.A."/>
            <person name="Carpenter L."/>
            <person name="White O."/>
            <person name="Peterson J.D."/>
            <person name="DeBoy R.T."/>
            <person name="Dodson R.J."/>
            <person name="Gwinn M.L."/>
            <person name="Haft D.H."/>
            <person name="Hickey E.K."/>
            <person name="Kolonay J.F."/>
            <person name="Nelson W.C."/>
            <person name="Umayam L.A."/>
            <person name="Ermolaeva M.D."/>
            <person name="Salzberg S.L."/>
            <person name="Delcher A."/>
            <person name="Utterback T.R."/>
            <person name="Weidman J.F."/>
            <person name="Khouri H.M."/>
            <person name="Gill J."/>
            <person name="Mikula A."/>
            <person name="Bishai W."/>
            <person name="Jacobs W.R. Jr."/>
            <person name="Venter J.C."/>
            <person name="Fraser C.M."/>
        </authorList>
    </citation>
    <scope>NUCLEOTIDE SEQUENCE [LARGE SCALE GENOMIC DNA]</scope>
    <source>
        <strain>CDC 1551 / Oshkosh</strain>
    </source>
</reference>
<protein>
    <recommendedName>
        <fullName>Diacylglycerol acyltransferase/mycolyltransferase Ag85C</fullName>
        <shortName>DGAT</shortName>
        <ecNumber>2.3.1.122</ecNumber>
        <ecNumber>2.3.1.20</ecNumber>
    </recommendedName>
    <alternativeName>
        <fullName>Acyl-CoA:diacylglycerol acyltransferase</fullName>
    </alternativeName>
    <alternativeName>
        <fullName>Antigen 85 complex C</fullName>
        <shortName>85C</shortName>
        <shortName>Ag85C</shortName>
    </alternativeName>
    <alternativeName>
        <fullName>Fibronectin-binding protein C</fullName>
        <shortName>Fbps C</shortName>
    </alternativeName>
</protein>
<keyword id="KW-0012">Acyltransferase</keyword>
<keyword id="KW-1185">Reference proteome</keyword>
<keyword id="KW-0964">Secreted</keyword>
<keyword id="KW-0732">Signal</keyword>
<keyword id="KW-0808">Transferase</keyword>
<proteinExistence type="inferred from homology"/>
<evidence type="ECO:0000250" key="1"/>
<evidence type="ECO:0000255" key="2"/>
<evidence type="ECO:0000305" key="3"/>
<sequence length="340" mass="36771">MTFFEQVRRLRSAATTLPRRLAIAAMGAVLVYGLVGTFGGPATAGAFSRPGLPVEYLQVPSASMGRDIKVQFQGGGPHAVYLLDGLRAQDDYNGWDINTPAFEEYYQSGLSVIMPVGGQSSFYTDWYQPSQSNGQNYTYKWETFLTREMPAWLQANKGVSPTGNAAVGLSMSGGSALILAAYYPQQFPYAASLSGFLNPSEGWWPTLIGLAMNDSGGYNANSMWGPSSDPAWKRNDPMVQIPRLVANNTRIWVYCGNGTPSDLGGDNIPAKFLEGLTLRTNQTFRDTYAADGGRNGVFNFPPNGTHSWPYWNEQLVAMKADIQHVLNGATPPAAPAAPAA</sequence>
<accession>P9WQN8</accession>
<accession>L0T2K1</accession>
<accession>P0A4V4</accession>
<accession>P31953</accession>
<accession>P96806</accession>
<feature type="signal peptide" evidence="2">
    <location>
        <begin position="1"/>
        <end position="45"/>
    </location>
</feature>
<feature type="chain" id="PRO_0000426743" description="Diacylglycerol acyltransferase/mycolyltransferase Ag85C">
    <location>
        <begin position="46"/>
        <end position="340"/>
    </location>
</feature>
<feature type="region of interest" description="Fibronectin-binding" evidence="1">
    <location>
        <begin position="102"/>
        <end position="112"/>
    </location>
</feature>
<feature type="active site" description="Nucleophile" evidence="1">
    <location>
        <position position="170"/>
    </location>
</feature>
<feature type="active site" evidence="1">
    <location>
        <position position="274"/>
    </location>
</feature>
<feature type="active site" evidence="1">
    <location>
        <position position="306"/>
    </location>
</feature>
<feature type="binding site" evidence="1">
    <location>
        <begin position="86"/>
        <end position="87"/>
    </location>
    <ligand>
        <name>substrate</name>
    </ligand>
</feature>
<feature type="binding site" evidence="1">
    <location>
        <position position="170"/>
    </location>
    <ligand>
        <name>substrate</name>
    </ligand>
</feature>
<feature type="binding site" evidence="1">
    <location>
        <position position="198"/>
    </location>
    <ligand>
        <name>substrate</name>
    </ligand>
</feature>
<feature type="binding site" evidence="1">
    <location>
        <begin position="276"/>
        <end position="279"/>
    </location>
    <ligand>
        <name>substrate</name>
    </ligand>
</feature>
<feature type="binding site" evidence="1">
    <location>
        <position position="283"/>
    </location>
    <ligand>
        <name>substrate</name>
    </ligand>
</feature>
<feature type="binding site" evidence="1">
    <location>
        <begin position="306"/>
        <end position="308"/>
    </location>
    <ligand>
        <name>substrate</name>
    </ligand>
</feature>
<organism>
    <name type="scientific">Mycobacterium tuberculosis (strain CDC 1551 / Oshkosh)</name>
    <dbReference type="NCBI Taxonomy" id="83331"/>
    <lineage>
        <taxon>Bacteria</taxon>
        <taxon>Bacillati</taxon>
        <taxon>Actinomycetota</taxon>
        <taxon>Actinomycetes</taxon>
        <taxon>Mycobacteriales</taxon>
        <taxon>Mycobacteriaceae</taxon>
        <taxon>Mycobacterium</taxon>
        <taxon>Mycobacterium tuberculosis complex</taxon>
    </lineage>
</organism>